<reference key="1">
    <citation type="submission" date="2007-04" db="EMBL/GenBank/DDBJ databases">
        <title>Complete sequence of Shewanella putrefaciens CN-32.</title>
        <authorList>
            <consortium name="US DOE Joint Genome Institute"/>
            <person name="Copeland A."/>
            <person name="Lucas S."/>
            <person name="Lapidus A."/>
            <person name="Barry K."/>
            <person name="Detter J.C."/>
            <person name="Glavina del Rio T."/>
            <person name="Hammon N."/>
            <person name="Israni S."/>
            <person name="Dalin E."/>
            <person name="Tice H."/>
            <person name="Pitluck S."/>
            <person name="Chain P."/>
            <person name="Malfatti S."/>
            <person name="Shin M."/>
            <person name="Vergez L."/>
            <person name="Schmutz J."/>
            <person name="Larimer F."/>
            <person name="Land M."/>
            <person name="Hauser L."/>
            <person name="Kyrpides N."/>
            <person name="Mikhailova N."/>
            <person name="Romine M.F."/>
            <person name="Fredrickson J."/>
            <person name="Tiedje J."/>
            <person name="Richardson P."/>
        </authorList>
    </citation>
    <scope>NUCLEOTIDE SEQUENCE [LARGE SCALE GENOMIC DNA]</scope>
    <source>
        <strain>CN-32 / ATCC BAA-453</strain>
    </source>
</reference>
<proteinExistence type="inferred from homology"/>
<organism>
    <name type="scientific">Shewanella putrefaciens (strain CN-32 / ATCC BAA-453)</name>
    <dbReference type="NCBI Taxonomy" id="319224"/>
    <lineage>
        <taxon>Bacteria</taxon>
        <taxon>Pseudomonadati</taxon>
        <taxon>Pseudomonadota</taxon>
        <taxon>Gammaproteobacteria</taxon>
        <taxon>Alteromonadales</taxon>
        <taxon>Shewanellaceae</taxon>
        <taxon>Shewanella</taxon>
    </lineage>
</organism>
<keyword id="KW-0066">ATP synthesis</keyword>
<keyword id="KW-0997">Cell inner membrane</keyword>
<keyword id="KW-1003">Cell membrane</keyword>
<keyword id="KW-0139">CF(1)</keyword>
<keyword id="KW-0375">Hydrogen ion transport</keyword>
<keyword id="KW-0406">Ion transport</keyword>
<keyword id="KW-0472">Membrane</keyword>
<keyword id="KW-0813">Transport</keyword>
<sequence>MAGAKEIKTKIASVKNTQKITSAMEMVAASKMRRAQERMAASRPYAESMRKVIGHVAQGSLEYKHPYLEVREAKRVGYIVVATDRGLCGGLNVNLFKKVLLDLKNWKEQGAEVEFCPIGARSVQFFKSFGGTMPAHASGLGDAPSIADLIGTVRVMLKAYNEGKLDRLFIVFNKFVNTMTQAPVIEQLLPLPKSEEVANKHPWDYIYEPDPKVLLDTLLVRYIESQVYQGVVENIASEQAARMVAMKAATDNAGELINDLQLVYNKARQAAITQELSEIVSGASAV</sequence>
<accession>A4YCH9</accession>
<protein>
    <recommendedName>
        <fullName evidence="1">ATP synthase gamma chain</fullName>
    </recommendedName>
    <alternativeName>
        <fullName evidence="1">ATP synthase F1 sector gamma subunit</fullName>
    </alternativeName>
    <alternativeName>
        <fullName evidence="1">F-ATPase gamma subunit</fullName>
    </alternativeName>
</protein>
<name>ATPG_SHEPC</name>
<comment type="function">
    <text evidence="1">Produces ATP from ADP in the presence of a proton gradient across the membrane. The gamma chain is believed to be important in regulating ATPase activity and the flow of protons through the CF(0) complex.</text>
</comment>
<comment type="subunit">
    <text evidence="1">F-type ATPases have 2 components, CF(1) - the catalytic core - and CF(0) - the membrane proton channel. CF(1) has five subunits: alpha(3), beta(3), gamma(1), delta(1), epsilon(1). CF(0) has three main subunits: a, b and c.</text>
</comment>
<comment type="subcellular location">
    <subcellularLocation>
        <location evidence="1">Cell inner membrane</location>
        <topology evidence="1">Peripheral membrane protein</topology>
    </subcellularLocation>
</comment>
<comment type="similarity">
    <text evidence="1">Belongs to the ATPase gamma chain family.</text>
</comment>
<gene>
    <name evidence="1" type="primary">atpG</name>
    <name type="ordered locus">Sputcn32_3957</name>
</gene>
<feature type="chain" id="PRO_1000053330" description="ATP synthase gamma chain">
    <location>
        <begin position="1"/>
        <end position="286"/>
    </location>
</feature>
<dbReference type="EMBL" id="CP000681">
    <property type="protein sequence ID" value="ABP77662.1"/>
    <property type="molecule type" value="Genomic_DNA"/>
</dbReference>
<dbReference type="SMR" id="A4YCH9"/>
<dbReference type="STRING" id="319224.Sputcn32_3957"/>
<dbReference type="KEGG" id="spc:Sputcn32_3957"/>
<dbReference type="eggNOG" id="COG0224">
    <property type="taxonomic scope" value="Bacteria"/>
</dbReference>
<dbReference type="HOGENOM" id="CLU_050669_0_1_6"/>
<dbReference type="GO" id="GO:0005886">
    <property type="term" value="C:plasma membrane"/>
    <property type="evidence" value="ECO:0007669"/>
    <property type="project" value="UniProtKB-SubCell"/>
</dbReference>
<dbReference type="GO" id="GO:0045259">
    <property type="term" value="C:proton-transporting ATP synthase complex"/>
    <property type="evidence" value="ECO:0007669"/>
    <property type="project" value="UniProtKB-KW"/>
</dbReference>
<dbReference type="GO" id="GO:0005524">
    <property type="term" value="F:ATP binding"/>
    <property type="evidence" value="ECO:0007669"/>
    <property type="project" value="UniProtKB-UniRule"/>
</dbReference>
<dbReference type="GO" id="GO:0046933">
    <property type="term" value="F:proton-transporting ATP synthase activity, rotational mechanism"/>
    <property type="evidence" value="ECO:0007669"/>
    <property type="project" value="UniProtKB-UniRule"/>
</dbReference>
<dbReference type="GO" id="GO:0042777">
    <property type="term" value="P:proton motive force-driven plasma membrane ATP synthesis"/>
    <property type="evidence" value="ECO:0007669"/>
    <property type="project" value="UniProtKB-UniRule"/>
</dbReference>
<dbReference type="CDD" id="cd12151">
    <property type="entry name" value="F1-ATPase_gamma"/>
    <property type="match status" value="1"/>
</dbReference>
<dbReference type="FunFam" id="1.10.287.80:FF:000005">
    <property type="entry name" value="ATP synthase gamma chain"/>
    <property type="match status" value="2"/>
</dbReference>
<dbReference type="FunFam" id="3.40.1380.10:FF:000001">
    <property type="entry name" value="ATP synthase gamma chain"/>
    <property type="match status" value="1"/>
</dbReference>
<dbReference type="Gene3D" id="3.40.1380.10">
    <property type="match status" value="1"/>
</dbReference>
<dbReference type="Gene3D" id="1.10.287.80">
    <property type="entry name" value="ATP synthase, gamma subunit, helix hairpin domain"/>
    <property type="match status" value="1"/>
</dbReference>
<dbReference type="HAMAP" id="MF_00815">
    <property type="entry name" value="ATP_synth_gamma_bact"/>
    <property type="match status" value="1"/>
</dbReference>
<dbReference type="InterPro" id="IPR035968">
    <property type="entry name" value="ATP_synth_F1_ATPase_gsu"/>
</dbReference>
<dbReference type="InterPro" id="IPR000131">
    <property type="entry name" value="ATP_synth_F1_gsu"/>
</dbReference>
<dbReference type="InterPro" id="IPR023632">
    <property type="entry name" value="ATP_synth_F1_gsu_CS"/>
</dbReference>
<dbReference type="NCBIfam" id="TIGR01146">
    <property type="entry name" value="ATPsyn_F1gamma"/>
    <property type="match status" value="1"/>
</dbReference>
<dbReference type="NCBIfam" id="NF004144">
    <property type="entry name" value="PRK05621.1-1"/>
    <property type="match status" value="1"/>
</dbReference>
<dbReference type="PANTHER" id="PTHR11693">
    <property type="entry name" value="ATP SYNTHASE GAMMA CHAIN"/>
    <property type="match status" value="1"/>
</dbReference>
<dbReference type="PANTHER" id="PTHR11693:SF22">
    <property type="entry name" value="ATP SYNTHASE SUBUNIT GAMMA, MITOCHONDRIAL"/>
    <property type="match status" value="1"/>
</dbReference>
<dbReference type="Pfam" id="PF00231">
    <property type="entry name" value="ATP-synt"/>
    <property type="match status" value="1"/>
</dbReference>
<dbReference type="PRINTS" id="PR00126">
    <property type="entry name" value="ATPASEGAMMA"/>
</dbReference>
<dbReference type="SUPFAM" id="SSF52943">
    <property type="entry name" value="ATP synthase (F1-ATPase), gamma subunit"/>
    <property type="match status" value="1"/>
</dbReference>
<dbReference type="PROSITE" id="PS00153">
    <property type="entry name" value="ATPASE_GAMMA"/>
    <property type="match status" value="1"/>
</dbReference>
<evidence type="ECO:0000255" key="1">
    <source>
        <dbReference type="HAMAP-Rule" id="MF_00815"/>
    </source>
</evidence>